<evidence type="ECO:0000255" key="1">
    <source>
        <dbReference type="HAMAP-Rule" id="MF_00294"/>
    </source>
</evidence>
<evidence type="ECO:0000305" key="2"/>
<organism>
    <name type="scientific">Gluconacetobacter diazotrophicus (strain ATCC 49037 / DSM 5601 / CCUG 37298 / CIP 103539 / LMG 7603 / PAl5)</name>
    <dbReference type="NCBI Taxonomy" id="272568"/>
    <lineage>
        <taxon>Bacteria</taxon>
        <taxon>Pseudomonadati</taxon>
        <taxon>Pseudomonadota</taxon>
        <taxon>Alphaproteobacteria</taxon>
        <taxon>Acetobacterales</taxon>
        <taxon>Acetobacteraceae</taxon>
        <taxon>Gluconacetobacter</taxon>
    </lineage>
</organism>
<feature type="chain" id="PRO_1000204910" description="Large ribosomal subunit protein bL33">
    <location>
        <begin position="1"/>
        <end position="55"/>
    </location>
</feature>
<reference key="1">
    <citation type="journal article" date="2009" name="BMC Genomics">
        <title>Complete genome sequence of the sugarcane nitrogen-fixing endophyte Gluconacetobacter diazotrophicus Pal5.</title>
        <authorList>
            <person name="Bertalan M."/>
            <person name="Albano R."/>
            <person name="de Padua V."/>
            <person name="Rouws L."/>
            <person name="Rojas C."/>
            <person name="Hemerly A."/>
            <person name="Teixeira K."/>
            <person name="Schwab S."/>
            <person name="Araujo J."/>
            <person name="Oliveira A."/>
            <person name="Franca L."/>
            <person name="Magalhaes V."/>
            <person name="Alqueres S."/>
            <person name="Cardoso A."/>
            <person name="Almeida W."/>
            <person name="Loureiro M.M."/>
            <person name="Nogueira E."/>
            <person name="Cidade D."/>
            <person name="Oliveira D."/>
            <person name="Simao T."/>
            <person name="Macedo J."/>
            <person name="Valadao A."/>
            <person name="Dreschsel M."/>
            <person name="Freitas F."/>
            <person name="Vidal M."/>
            <person name="Guedes H."/>
            <person name="Rodrigues E."/>
            <person name="Meneses C."/>
            <person name="Brioso P."/>
            <person name="Pozzer L."/>
            <person name="Figueiredo D."/>
            <person name="Montano H."/>
            <person name="Junior J."/>
            <person name="de Souza Filho G."/>
            <person name="Martin Quintana Flores V."/>
            <person name="Ferreira B."/>
            <person name="Branco A."/>
            <person name="Gonzalez P."/>
            <person name="Guillobel H."/>
            <person name="Lemos M."/>
            <person name="Seibel L."/>
            <person name="Macedo J."/>
            <person name="Alves-Ferreira M."/>
            <person name="Sachetto-Martins G."/>
            <person name="Coelho A."/>
            <person name="Santos E."/>
            <person name="Amaral G."/>
            <person name="Neves A."/>
            <person name="Pacheco A.B."/>
            <person name="Carvalho D."/>
            <person name="Lery L."/>
            <person name="Bisch P."/>
            <person name="Rossle S.C."/>
            <person name="Urmenyi T."/>
            <person name="Rael Pereira A."/>
            <person name="Silva R."/>
            <person name="Rondinelli E."/>
            <person name="von Kruger W."/>
            <person name="Martins O."/>
            <person name="Baldani J.I."/>
            <person name="Ferreira P.C."/>
        </authorList>
    </citation>
    <scope>NUCLEOTIDE SEQUENCE [LARGE SCALE GENOMIC DNA]</scope>
    <source>
        <strain>ATCC 49037 / DSM 5601 / CCUG 37298 / CIP 103539 / LMG 7603 / PAl5</strain>
    </source>
</reference>
<reference key="2">
    <citation type="journal article" date="2010" name="Stand. Genomic Sci.">
        <title>Two genome sequences of the same bacterial strain, Gluconacetobacter diazotrophicus PAl 5, suggest a new standard in genome sequence submission.</title>
        <authorList>
            <person name="Giongo A."/>
            <person name="Tyler H.L."/>
            <person name="Zipperer U.N."/>
            <person name="Triplett E.W."/>
        </authorList>
    </citation>
    <scope>NUCLEOTIDE SEQUENCE [LARGE SCALE GENOMIC DNA]</scope>
    <source>
        <strain>ATCC 49037 / DSM 5601 / CCUG 37298 / CIP 103539 / LMG 7603 / PAl5</strain>
    </source>
</reference>
<keyword id="KW-1185">Reference proteome</keyword>
<keyword id="KW-0687">Ribonucleoprotein</keyword>
<keyword id="KW-0689">Ribosomal protein</keyword>
<sequence length="55" mass="6289">MAKSNTIQIKLVSSADTGYFYVTKKNARAQTGKLEMRKYDPVARKHVAFREAKIK</sequence>
<name>RL33_GLUDA</name>
<comment type="similarity">
    <text evidence="1">Belongs to the bacterial ribosomal protein bL33 family.</text>
</comment>
<accession>A9HJ69</accession>
<dbReference type="EMBL" id="CP001189">
    <property type="protein sequence ID" value="ACI49947.1"/>
    <property type="molecule type" value="Genomic_DNA"/>
</dbReference>
<dbReference type="EMBL" id="AM889285">
    <property type="protein sequence ID" value="CAP55868.1"/>
    <property type="molecule type" value="Genomic_DNA"/>
</dbReference>
<dbReference type="RefSeq" id="WP_012225557.1">
    <property type="nucleotide sequence ID" value="NC_010125.1"/>
</dbReference>
<dbReference type="SMR" id="A9HJ69"/>
<dbReference type="STRING" id="272568.GDI1925"/>
<dbReference type="KEGG" id="gdi:GDI1925"/>
<dbReference type="KEGG" id="gdj:Gdia_0147"/>
<dbReference type="eggNOG" id="COG0267">
    <property type="taxonomic scope" value="Bacteria"/>
</dbReference>
<dbReference type="HOGENOM" id="CLU_190949_1_1_5"/>
<dbReference type="OrthoDB" id="21586at2"/>
<dbReference type="Proteomes" id="UP000001176">
    <property type="component" value="Chromosome"/>
</dbReference>
<dbReference type="GO" id="GO:0022625">
    <property type="term" value="C:cytosolic large ribosomal subunit"/>
    <property type="evidence" value="ECO:0007669"/>
    <property type="project" value="TreeGrafter"/>
</dbReference>
<dbReference type="GO" id="GO:0003735">
    <property type="term" value="F:structural constituent of ribosome"/>
    <property type="evidence" value="ECO:0007669"/>
    <property type="project" value="InterPro"/>
</dbReference>
<dbReference type="GO" id="GO:0006412">
    <property type="term" value="P:translation"/>
    <property type="evidence" value="ECO:0007669"/>
    <property type="project" value="UniProtKB-UniRule"/>
</dbReference>
<dbReference type="Gene3D" id="2.20.28.120">
    <property type="entry name" value="Ribosomal protein L33"/>
    <property type="match status" value="1"/>
</dbReference>
<dbReference type="HAMAP" id="MF_00294">
    <property type="entry name" value="Ribosomal_bL33"/>
    <property type="match status" value="1"/>
</dbReference>
<dbReference type="InterPro" id="IPR001705">
    <property type="entry name" value="Ribosomal_bL33"/>
</dbReference>
<dbReference type="InterPro" id="IPR018264">
    <property type="entry name" value="Ribosomal_bL33_CS"/>
</dbReference>
<dbReference type="InterPro" id="IPR038584">
    <property type="entry name" value="Ribosomal_bL33_sf"/>
</dbReference>
<dbReference type="InterPro" id="IPR011332">
    <property type="entry name" value="Ribosomal_zn-bd"/>
</dbReference>
<dbReference type="NCBIfam" id="NF001860">
    <property type="entry name" value="PRK00595.1"/>
    <property type="match status" value="1"/>
</dbReference>
<dbReference type="NCBIfam" id="TIGR01023">
    <property type="entry name" value="rpmG_bact"/>
    <property type="match status" value="1"/>
</dbReference>
<dbReference type="PANTHER" id="PTHR15238">
    <property type="entry name" value="54S RIBOSOMAL PROTEIN L39, MITOCHONDRIAL"/>
    <property type="match status" value="1"/>
</dbReference>
<dbReference type="PANTHER" id="PTHR15238:SF1">
    <property type="entry name" value="LARGE RIBOSOMAL SUBUNIT PROTEIN BL33M"/>
    <property type="match status" value="1"/>
</dbReference>
<dbReference type="Pfam" id="PF00471">
    <property type="entry name" value="Ribosomal_L33"/>
    <property type="match status" value="1"/>
</dbReference>
<dbReference type="SUPFAM" id="SSF57829">
    <property type="entry name" value="Zn-binding ribosomal proteins"/>
    <property type="match status" value="1"/>
</dbReference>
<dbReference type="PROSITE" id="PS00582">
    <property type="entry name" value="RIBOSOMAL_L33"/>
    <property type="match status" value="1"/>
</dbReference>
<gene>
    <name evidence="1" type="primary">rpmG</name>
    <name type="ordered locus">GDI1925</name>
    <name type="ordered locus">Gdia_0147</name>
</gene>
<protein>
    <recommendedName>
        <fullName evidence="1">Large ribosomal subunit protein bL33</fullName>
    </recommendedName>
    <alternativeName>
        <fullName evidence="2">50S ribosomal protein L33</fullName>
    </alternativeName>
</protein>
<proteinExistence type="inferred from homology"/>